<reference key="1">
    <citation type="journal article" date="2003" name="PLoS Biol.">
        <title>The genome sequence of Caenorhabditis briggsae: a platform for comparative genomics.</title>
        <authorList>
            <person name="Stein L.D."/>
            <person name="Bao Z."/>
            <person name="Blasiar D."/>
            <person name="Blumenthal T."/>
            <person name="Brent M.R."/>
            <person name="Chen N."/>
            <person name="Chinwalla A."/>
            <person name="Clarke L."/>
            <person name="Clee C."/>
            <person name="Coghlan A."/>
            <person name="Coulson A."/>
            <person name="D'Eustachio P."/>
            <person name="Fitch D.H.A."/>
            <person name="Fulton L.A."/>
            <person name="Fulton R.E."/>
            <person name="Griffiths-Jones S."/>
            <person name="Harris T.W."/>
            <person name="Hillier L.W."/>
            <person name="Kamath R."/>
            <person name="Kuwabara P.E."/>
            <person name="Mardis E.R."/>
            <person name="Marra M.A."/>
            <person name="Miner T.L."/>
            <person name="Minx P."/>
            <person name="Mullikin J.C."/>
            <person name="Plumb R.W."/>
            <person name="Rogers J."/>
            <person name="Schein J.E."/>
            <person name="Sohrmann M."/>
            <person name="Spieth J."/>
            <person name="Stajich J.E."/>
            <person name="Wei C."/>
            <person name="Willey D."/>
            <person name="Wilson R.K."/>
            <person name="Durbin R.M."/>
            <person name="Waterston R.H."/>
        </authorList>
    </citation>
    <scope>NUCLEOTIDE SEQUENCE [LARGE SCALE GENOMIC DNA]</scope>
    <source>
        <strain>AF16</strain>
    </source>
</reference>
<gene>
    <name evidence="2" type="primary">wee-1.3</name>
    <name type="ORF">CBG01053</name>
</gene>
<proteinExistence type="inferred from homology"/>
<keyword id="KW-0067">ATP-binding</keyword>
<keyword id="KW-0131">Cell cycle</keyword>
<keyword id="KW-0963">Cytoplasm</keyword>
<keyword id="KW-0217">Developmental protein</keyword>
<keyword id="KW-0221">Differentiation</keyword>
<keyword id="KW-0333">Golgi apparatus</keyword>
<keyword id="KW-0418">Kinase</keyword>
<keyword id="KW-0460">Magnesium</keyword>
<keyword id="KW-0472">Membrane</keyword>
<keyword id="KW-0479">Metal-binding</keyword>
<keyword id="KW-0547">Nucleotide-binding</keyword>
<keyword id="KW-0896">Oogenesis</keyword>
<keyword id="KW-1185">Reference proteome</keyword>
<keyword id="KW-0723">Serine/threonine-protein kinase</keyword>
<keyword id="KW-0744">Spermatogenesis</keyword>
<keyword id="KW-0808">Transferase</keyword>
<name>PMY13_CAEBR</name>
<sequence>MDETENNTSIDSVEVGPSSPRVVATPRIPIPVMMRETPLSTKRERQALTPRFRRPAPRMIKTVPQTRSIWSVRKDTTPQLVTPHGPQELESPHYDRANTQTFFEQVFQIDEIIGRGSFGEVFAARCREDSRLYAVKVSIAPMRQHSMSKYREAESHMIIPPHKNLVKFYRAWEETDRLYIQTELCEQSLQQYCSVQHALPENEIWNIFVDLLEAVHHLHSNDMIHDDIKPENIFLTKHKICKLGDFGLVINLKNPNDVKSAEEGDSKYLAPEVLNGKPTFASDIFSLGVTILEAATDLDVPSNGDAWHQIRNGQIPERFFVGISSDLRVLIEQMINKEPMKRPTSDALRKHLSIRTRLDSRRRYILSMDMRDGFCNLMSSILVWCMAFLSVVFHPVTRFHEAINNRRSELCAQFVNNQQHTPIQTPETSKVYSESLTGVALRQASQISPFDFSDDENPPHSQRRLFTGPVSRRLNFDDEMEDEEQATCSSSNSSAIETAEDSLSSPKKPVIPVTRQGTPKSARRLIPSYRNRSGSRDPTHHAGAGDSMNSSILDQERTDRYLRMRLAEQQLDWNDHSNMIDEAPPPMSCPPRIRRSLRDMPRMPVLNFNLLDEPIKKGKEKPVVEPAELRQRPMRNGLKSLRSRMASFQGSSGDEN</sequence>
<accession>Q626B1</accession>
<accession>A8WP04</accession>
<evidence type="ECO:0000250" key="1"/>
<evidence type="ECO:0000250" key="2">
    <source>
        <dbReference type="UniProtKB" id="O18209"/>
    </source>
</evidence>
<evidence type="ECO:0000255" key="3">
    <source>
        <dbReference type="PROSITE-ProRule" id="PRU00159"/>
    </source>
</evidence>
<evidence type="ECO:0000255" key="4">
    <source>
        <dbReference type="PROSITE-ProRule" id="PRU10027"/>
    </source>
</evidence>
<evidence type="ECO:0000256" key="5">
    <source>
        <dbReference type="SAM" id="MobiDB-lite"/>
    </source>
</evidence>
<feature type="chain" id="PRO_0000282348" description="Membrane-associated tyrosine- and threonine-specific cdc2-inhibitory kinase wee-1.3">
    <location>
        <begin position="1"/>
        <end position="656"/>
    </location>
</feature>
<feature type="domain" description="Protein kinase" evidence="3">
    <location>
        <begin position="107"/>
        <end position="354"/>
    </location>
</feature>
<feature type="region of interest" description="Disordered" evidence="5">
    <location>
        <begin position="1"/>
        <end position="24"/>
    </location>
</feature>
<feature type="region of interest" description="Disordered" evidence="5">
    <location>
        <begin position="449"/>
        <end position="552"/>
    </location>
</feature>
<feature type="region of interest" description="Disordered" evidence="5">
    <location>
        <begin position="617"/>
        <end position="656"/>
    </location>
</feature>
<feature type="compositionally biased region" description="Polar residues" evidence="5">
    <location>
        <begin position="1"/>
        <end position="11"/>
    </location>
</feature>
<feature type="compositionally biased region" description="Polar residues" evidence="5">
    <location>
        <begin position="486"/>
        <end position="505"/>
    </location>
</feature>
<feature type="compositionally biased region" description="Basic and acidic residues" evidence="5">
    <location>
        <begin position="617"/>
        <end position="631"/>
    </location>
</feature>
<feature type="compositionally biased region" description="Polar residues" evidence="5">
    <location>
        <begin position="646"/>
        <end position="656"/>
    </location>
</feature>
<feature type="active site" description="Proton acceptor" evidence="3 4">
    <location>
        <position position="227"/>
    </location>
</feature>
<feature type="binding site" evidence="3">
    <location>
        <begin position="113"/>
        <end position="121"/>
    </location>
    <ligand>
        <name>ATP</name>
        <dbReference type="ChEBI" id="CHEBI:30616"/>
    </ligand>
</feature>
<feature type="binding site" evidence="3">
    <location>
        <position position="136"/>
    </location>
    <ligand>
        <name>ATP</name>
        <dbReference type="ChEBI" id="CHEBI:30616"/>
    </ligand>
</feature>
<feature type="binding site" evidence="1">
    <location>
        <position position="232"/>
    </location>
    <ligand>
        <name>Mg(2+)</name>
        <dbReference type="ChEBI" id="CHEBI:18420"/>
    </ligand>
</feature>
<feature type="binding site" evidence="1">
    <location>
        <position position="245"/>
    </location>
    <ligand>
        <name>Mg(2+)</name>
        <dbReference type="ChEBI" id="CHEBI:18420"/>
    </ligand>
</feature>
<dbReference type="EC" id="2.7.11.1"/>
<dbReference type="EMBL" id="HE600951">
    <property type="protein sequence ID" value="CAP22210.1"/>
    <property type="molecule type" value="Genomic_DNA"/>
</dbReference>
<dbReference type="SMR" id="Q626B1"/>
<dbReference type="FunCoup" id="Q626B1">
    <property type="interactions" value="184"/>
</dbReference>
<dbReference type="STRING" id="6238.Q626B1"/>
<dbReference type="EnsemblMetazoa" id="CBG01053a.1">
    <property type="protein sequence ID" value="CBG01053a.1"/>
    <property type="gene ID" value="WBGene00024344"/>
</dbReference>
<dbReference type="KEGG" id="cbr:CBG_01053"/>
<dbReference type="CTD" id="8573224"/>
<dbReference type="WormBase" id="CBG01053a">
    <property type="protein sequence ID" value="CBP13925"/>
    <property type="gene ID" value="WBGene00024344"/>
    <property type="gene designation" value="Cbr-wee-1.3"/>
</dbReference>
<dbReference type="eggNOG" id="KOG0601">
    <property type="taxonomic scope" value="Eukaryota"/>
</dbReference>
<dbReference type="HOGENOM" id="CLU_406103_0_0_1"/>
<dbReference type="InParanoid" id="Q626B1"/>
<dbReference type="OMA" id="ESHMIIP"/>
<dbReference type="Proteomes" id="UP000008549">
    <property type="component" value="Unassembled WGS sequence"/>
</dbReference>
<dbReference type="GO" id="GO:0005737">
    <property type="term" value="C:cytoplasm"/>
    <property type="evidence" value="ECO:0000250"/>
    <property type="project" value="UniProtKB"/>
</dbReference>
<dbReference type="GO" id="GO:0000139">
    <property type="term" value="C:Golgi membrane"/>
    <property type="evidence" value="ECO:0007669"/>
    <property type="project" value="UniProtKB-SubCell"/>
</dbReference>
<dbReference type="GO" id="GO:0005634">
    <property type="term" value="C:nucleus"/>
    <property type="evidence" value="ECO:0000318"/>
    <property type="project" value="GO_Central"/>
</dbReference>
<dbReference type="GO" id="GO:0005524">
    <property type="term" value="F:ATP binding"/>
    <property type="evidence" value="ECO:0007669"/>
    <property type="project" value="UniProtKB-KW"/>
</dbReference>
<dbReference type="GO" id="GO:0046872">
    <property type="term" value="F:metal ion binding"/>
    <property type="evidence" value="ECO:0007669"/>
    <property type="project" value="UniProtKB-KW"/>
</dbReference>
<dbReference type="GO" id="GO:0004672">
    <property type="term" value="F:protein kinase activity"/>
    <property type="evidence" value="ECO:0000318"/>
    <property type="project" value="GO_Central"/>
</dbReference>
<dbReference type="GO" id="GO:0106310">
    <property type="term" value="F:protein serine kinase activity"/>
    <property type="evidence" value="ECO:0007669"/>
    <property type="project" value="RHEA"/>
</dbReference>
<dbReference type="GO" id="GO:0004674">
    <property type="term" value="F:protein serine/threonine kinase activity"/>
    <property type="evidence" value="ECO:0007669"/>
    <property type="project" value="UniProtKB-KW"/>
</dbReference>
<dbReference type="GO" id="GO:0009792">
    <property type="term" value="P:embryo development ending in birth or egg hatching"/>
    <property type="evidence" value="ECO:0000250"/>
    <property type="project" value="UniProtKB"/>
</dbReference>
<dbReference type="GO" id="GO:0051321">
    <property type="term" value="P:meiotic cell cycle"/>
    <property type="evidence" value="ECO:0000318"/>
    <property type="project" value="GO_Central"/>
</dbReference>
<dbReference type="GO" id="GO:0010972">
    <property type="term" value="P:negative regulation of G2/M transition of mitotic cell cycle"/>
    <property type="evidence" value="ECO:0000318"/>
    <property type="project" value="GO_Central"/>
</dbReference>
<dbReference type="GO" id="GO:0110031">
    <property type="term" value="P:negative regulation of G2/MI transition of meiotic cell cycle"/>
    <property type="evidence" value="ECO:0000318"/>
    <property type="project" value="GO_Central"/>
</dbReference>
<dbReference type="GO" id="GO:0002119">
    <property type="term" value="P:nematode larval development"/>
    <property type="evidence" value="ECO:0000250"/>
    <property type="project" value="UniProtKB"/>
</dbReference>
<dbReference type="GO" id="GO:0048477">
    <property type="term" value="P:oogenesis"/>
    <property type="evidence" value="ECO:0000250"/>
    <property type="project" value="UniProtKB"/>
</dbReference>
<dbReference type="GO" id="GO:0007283">
    <property type="term" value="P:spermatogenesis"/>
    <property type="evidence" value="ECO:0007669"/>
    <property type="project" value="UniProtKB-KW"/>
</dbReference>
<dbReference type="CDD" id="cd14050">
    <property type="entry name" value="PKc_Myt1"/>
    <property type="match status" value="1"/>
</dbReference>
<dbReference type="FunFam" id="1.10.510.10:FF:000315">
    <property type="entry name" value="membrane-associated tyrosine- and threonine-specific cdc2-inhibitory kinase"/>
    <property type="match status" value="1"/>
</dbReference>
<dbReference type="FunFam" id="3.30.200.20:FF:001369">
    <property type="entry name" value="Membrane-associated tyrosine- and threonine-specific cdc2-inhibitory kinase wee-1.3"/>
    <property type="match status" value="1"/>
</dbReference>
<dbReference type="Gene3D" id="3.30.200.20">
    <property type="entry name" value="Phosphorylase Kinase, domain 1"/>
    <property type="match status" value="1"/>
</dbReference>
<dbReference type="Gene3D" id="1.10.510.10">
    <property type="entry name" value="Transferase(Phosphotransferase) domain 1"/>
    <property type="match status" value="1"/>
</dbReference>
<dbReference type="InterPro" id="IPR050339">
    <property type="entry name" value="CC_SR_Kinase"/>
</dbReference>
<dbReference type="InterPro" id="IPR011009">
    <property type="entry name" value="Kinase-like_dom_sf"/>
</dbReference>
<dbReference type="InterPro" id="IPR000719">
    <property type="entry name" value="Prot_kinase_dom"/>
</dbReference>
<dbReference type="InterPro" id="IPR017441">
    <property type="entry name" value="Protein_kinase_ATP_BS"/>
</dbReference>
<dbReference type="InterPro" id="IPR008271">
    <property type="entry name" value="Ser/Thr_kinase_AS"/>
</dbReference>
<dbReference type="PANTHER" id="PTHR11042">
    <property type="entry name" value="EUKARYOTIC TRANSLATION INITIATION FACTOR 2-ALPHA KINASE EIF2-ALPHA KINASE -RELATED"/>
    <property type="match status" value="1"/>
</dbReference>
<dbReference type="PANTHER" id="PTHR11042:SF183">
    <property type="entry name" value="MEMBRANE-ASSOCIATED TYROSINE- AND THREONINE-SPECIFIC CDC2-INHIBITORY KINASE"/>
    <property type="match status" value="1"/>
</dbReference>
<dbReference type="Pfam" id="PF00069">
    <property type="entry name" value="Pkinase"/>
    <property type="match status" value="1"/>
</dbReference>
<dbReference type="SMART" id="SM00220">
    <property type="entry name" value="S_TKc"/>
    <property type="match status" value="1"/>
</dbReference>
<dbReference type="SUPFAM" id="SSF56112">
    <property type="entry name" value="Protein kinase-like (PK-like)"/>
    <property type="match status" value="1"/>
</dbReference>
<dbReference type="PROSITE" id="PS00107">
    <property type="entry name" value="PROTEIN_KINASE_ATP"/>
    <property type="match status" value="1"/>
</dbReference>
<dbReference type="PROSITE" id="PS50011">
    <property type="entry name" value="PROTEIN_KINASE_DOM"/>
    <property type="match status" value="1"/>
</dbReference>
<dbReference type="PROSITE" id="PS00108">
    <property type="entry name" value="PROTEIN_KINASE_ST"/>
    <property type="match status" value="1"/>
</dbReference>
<protein>
    <recommendedName>
        <fullName>Membrane-associated tyrosine- and threonine-specific cdc2-inhibitory kinase wee-1.3</fullName>
        <ecNumber>2.7.11.1</ecNumber>
    </recommendedName>
</protein>
<comment type="function">
    <text evidence="1">Acts as a negative regulator of entry into mitosis (G2 to M transition) by phosphorylation of the CDK1 kinase during oocyte maturation. Required for embryonic development, germline proliferation and initiation of meiosis during spermatogenesis. Required for chromosome structure during mitosis and negative regulation of nuclear envelope breakdown (By similarity).</text>
</comment>
<comment type="catalytic activity">
    <reaction evidence="2">
        <text>L-seryl-[protein] + ATP = O-phospho-L-seryl-[protein] + ADP + H(+)</text>
        <dbReference type="Rhea" id="RHEA:17989"/>
        <dbReference type="Rhea" id="RHEA-COMP:9863"/>
        <dbReference type="Rhea" id="RHEA-COMP:11604"/>
        <dbReference type="ChEBI" id="CHEBI:15378"/>
        <dbReference type="ChEBI" id="CHEBI:29999"/>
        <dbReference type="ChEBI" id="CHEBI:30616"/>
        <dbReference type="ChEBI" id="CHEBI:83421"/>
        <dbReference type="ChEBI" id="CHEBI:456216"/>
        <dbReference type="EC" id="2.7.11.1"/>
    </reaction>
</comment>
<comment type="catalytic activity">
    <reaction evidence="2">
        <text>L-threonyl-[protein] + ATP = O-phospho-L-threonyl-[protein] + ADP + H(+)</text>
        <dbReference type="Rhea" id="RHEA:46608"/>
        <dbReference type="Rhea" id="RHEA-COMP:11060"/>
        <dbReference type="Rhea" id="RHEA-COMP:11605"/>
        <dbReference type="ChEBI" id="CHEBI:15378"/>
        <dbReference type="ChEBI" id="CHEBI:30013"/>
        <dbReference type="ChEBI" id="CHEBI:30616"/>
        <dbReference type="ChEBI" id="CHEBI:61977"/>
        <dbReference type="ChEBI" id="CHEBI:456216"/>
        <dbReference type="EC" id="2.7.11.1"/>
    </reaction>
</comment>
<comment type="subcellular location">
    <subcellularLocation>
        <location evidence="1">Golgi apparatus membrane</location>
        <topology evidence="1">Peripheral membrane protein</topology>
    </subcellularLocation>
    <subcellularLocation>
        <location evidence="2">Cytoplasm</location>
    </subcellularLocation>
</comment>
<comment type="similarity">
    <text evidence="3">Belongs to the protein kinase superfamily. Ser/Thr protein kinase family. WEE1 subfamily.</text>
</comment>
<organism>
    <name type="scientific">Caenorhabditis briggsae</name>
    <dbReference type="NCBI Taxonomy" id="6238"/>
    <lineage>
        <taxon>Eukaryota</taxon>
        <taxon>Metazoa</taxon>
        <taxon>Ecdysozoa</taxon>
        <taxon>Nematoda</taxon>
        <taxon>Chromadorea</taxon>
        <taxon>Rhabditida</taxon>
        <taxon>Rhabditina</taxon>
        <taxon>Rhabditomorpha</taxon>
        <taxon>Rhabditoidea</taxon>
        <taxon>Rhabditidae</taxon>
        <taxon>Peloderinae</taxon>
        <taxon>Caenorhabditis</taxon>
    </lineage>
</organism>